<sequence>MSLRPNAKTEVRRNRYKVAVDAEEGRRRREDNMVEIRKSKREESLMKKRREGMQALQGFPSASAASVDKKLDSLKDMVAGVWSDDPALQLESTTQFRKLLSIERSPPIEEVISAGVVPRFVEFLKKEDYPAIQFEAAWALTNIASGTSDHTKVVIDHNAVPIFVQLLASPSDDVREQAVWALGNVAGDSPRCRDLVLGCGALLPLLNQLNEHAKLSMLRNATWTLSNFCRGKPQPHFDQVKPALPALERLIHSDDEEVLTDACWALSYLSDGTNDKIQTVIQAGVVPKLVELLLHHSPSVLIPALRTVGNIVTGDDIQTQCVINSGALPCLANLLTQNHKKSIKKEACWTISNITAGNKDQIQTVVEANLISPLVSLLQNAEFDIKKEAAWAISNATSGGSHDQIKYLVEQGCIKPLCDLLVCPDPRIITVCLEGLENILKVGEAEKNLGHTGDMNYYAQLIDDAEGLEKIENLQSHDNNEIYEKAVKILETYWLEEEDDETQQPPGVDGSQAGFQFGGNQAPVPSGGFNFS</sequence>
<name>IMPA1_ARATH</name>
<proteinExistence type="evidence at protein level"/>
<feature type="chain" id="PRO_0000120737" description="Importin subunit alpha-1">
    <location>
        <begin position="1"/>
        <end position="532"/>
    </location>
</feature>
<feature type="domain" description="IBB" evidence="2">
    <location>
        <begin position="1"/>
        <end position="58"/>
    </location>
</feature>
<feature type="repeat" description="ARM 1" evidence="1">
    <location>
        <begin position="62"/>
        <end position="101"/>
    </location>
</feature>
<feature type="repeat" description="ARM 2" evidence="1">
    <location>
        <begin position="105"/>
        <end position="145"/>
    </location>
</feature>
<feature type="repeat" description="ARM 3" evidence="1">
    <location>
        <begin position="148"/>
        <end position="187"/>
    </location>
</feature>
<feature type="repeat" description="ARM 4" evidence="1">
    <location>
        <begin position="190"/>
        <end position="230"/>
    </location>
</feature>
<feature type="repeat" description="ARM 5" evidence="1">
    <location>
        <begin position="232"/>
        <end position="271"/>
    </location>
</feature>
<feature type="repeat" description="ARM 6" evidence="1">
    <location>
        <begin position="274"/>
        <end position="313"/>
    </location>
</feature>
<feature type="repeat" description="ARM 7" evidence="1">
    <location>
        <begin position="316"/>
        <end position="356"/>
    </location>
</feature>
<feature type="repeat" description="ARM 8" evidence="1">
    <location>
        <begin position="359"/>
        <end position="398"/>
    </location>
</feature>
<feature type="repeat" description="ARM 9" evidence="1">
    <location>
        <begin position="402"/>
        <end position="441"/>
    </location>
</feature>
<feature type="repeat" description="ARM 10" evidence="1">
    <location>
        <begin position="456"/>
        <end position="495"/>
    </location>
</feature>
<feature type="region of interest" description="Disordered" evidence="3">
    <location>
        <begin position="497"/>
        <end position="532"/>
    </location>
</feature>
<feature type="sequence conflict" description="In Ref. 8; CAA75513." evidence="11" ref="8">
    <original>H</original>
    <variation>Y</variation>
    <location>
        <position position="150"/>
    </location>
</feature>
<feature type="sequence conflict" description="In Ref. 11; AAL06825." evidence="11" ref="11">
    <original>L</original>
    <variation>F</variation>
    <location>
        <position position="182"/>
    </location>
</feature>
<feature type="sequence conflict" description="In Ref. 6; AAB72116." evidence="11" ref="6">
    <original>G</original>
    <variation>P</variation>
    <location>
        <position position="231"/>
    </location>
</feature>
<reference key="1">
    <citation type="online journal article" date="1996" name="Plant Gene Register">
        <title>A cDNA encoding an importin alpha homologue from Arabidopsis thaliana.</title>
        <authorList>
            <person name="Smith H.M."/>
            <person name="Raikhel N.V."/>
        </authorList>
        <locator>PGR96-104</locator>
    </citation>
    <scope>NUCLEOTIDE SEQUENCE [MRNA]</scope>
    <scope>SUBCELLULAR LOCATION</scope>
    <source>
        <strain>cv. Columbia</strain>
    </source>
</reference>
<reference key="2">
    <citation type="journal article" date="1996" name="Plant Cell">
        <title>Nuclear import in permeabilized protoplasts from higher plants has unique features.</title>
        <authorList>
            <person name="Hicks G.R."/>
            <person name="Smith H.M."/>
            <person name="Lobreaux S."/>
            <person name="Raikhel N.V."/>
        </authorList>
    </citation>
    <scope>NUCLEOTIDE SEQUENCE [MRNA]</scope>
    <source>
        <strain>cv. Columbia</strain>
    </source>
</reference>
<reference key="3">
    <citation type="journal article" date="1997" name="Plant Physiol.">
        <title>Importin alpha from Arabidopsis thaliana is a nuclear import receptor that recognizes three classes of import signals.</title>
        <authorList>
            <person name="Smith H.M."/>
            <person name="Hicks G.R."/>
            <person name="Raikhel N.V."/>
        </authorList>
    </citation>
    <scope>NUCLEOTIDE SEQUENCE [MRNA]</scope>
    <source>
        <strain>cv. Columbia</strain>
    </source>
</reference>
<reference key="4">
    <citation type="online journal article" date="1997" name="Plant Gene Register">
        <title>AtKAPalpha gene from Arabidopsis encodes a protein that mediates nuclear import of Agrobacterium VirD2 protein.</title>
        <authorList>
            <person name="Ballas N."/>
            <person name="Citovsky V."/>
        </authorList>
        <locator>PGR97-129</locator>
    </citation>
    <scope>NUCLEOTIDE SEQUENCE [MRNA]</scope>
</reference>
<reference key="5">
    <citation type="journal article" date="1997" name="Proc. Natl. Acad. Sci. U.S.A.">
        <title>Nuclear localization signal binding protein from Arabidopsis mediates nuclear import of Agrobacterium VirD2 protein.</title>
        <authorList>
            <person name="Ballas N."/>
            <person name="Citovsky V."/>
        </authorList>
    </citation>
    <scope>NUCLEOTIDE SEQUENCE [MRNA]</scope>
</reference>
<reference key="6">
    <citation type="submission" date="2001-04" db="EMBL/GenBank/DDBJ databases">
        <authorList>
            <person name="Ballas N."/>
            <person name="Citovsky V."/>
        </authorList>
    </citation>
    <scope>SEQUENCE REVISION</scope>
</reference>
<reference key="7">
    <citation type="submission" date="1998-07" db="EMBL/GenBank/DDBJ databases">
        <authorList>
            <person name="Raikhel N.V."/>
            <person name="Smith H.M."/>
        </authorList>
    </citation>
    <scope>NUCLEOTIDE SEQUENCE [MRNA]</scope>
    <source>
        <strain>cv. Columbia</strain>
    </source>
</reference>
<reference key="8">
    <citation type="online journal article" date="1998" name="Plant Gene Register">
        <title>Characterization of four cDNAs encoding different importin alpha homologues from Arabidopsis thaliana, designated AtIMPa1-4.</title>
        <authorList>
            <person name="Schledz M."/>
            <person name="Leclerc D."/>
            <person name="Neuhaus G."/>
            <person name="Merkle T."/>
        </authorList>
        <locator>PGR98-022</locator>
    </citation>
    <scope>NUCLEOTIDE SEQUENCE [MRNA]</scope>
</reference>
<reference key="9">
    <citation type="journal article" date="2000" name="Nature">
        <title>Sequence and analysis of chromosome 3 of the plant Arabidopsis thaliana.</title>
        <authorList>
            <person name="Salanoubat M."/>
            <person name="Lemcke K."/>
            <person name="Rieger M."/>
            <person name="Ansorge W."/>
            <person name="Unseld M."/>
            <person name="Fartmann B."/>
            <person name="Valle G."/>
            <person name="Bloecker H."/>
            <person name="Perez-Alonso M."/>
            <person name="Obermaier B."/>
            <person name="Delseny M."/>
            <person name="Boutry M."/>
            <person name="Grivell L.A."/>
            <person name="Mache R."/>
            <person name="Puigdomenech P."/>
            <person name="De Simone V."/>
            <person name="Choisne N."/>
            <person name="Artiguenave F."/>
            <person name="Robert C."/>
            <person name="Brottier P."/>
            <person name="Wincker P."/>
            <person name="Cattolico L."/>
            <person name="Weissenbach J."/>
            <person name="Saurin W."/>
            <person name="Quetier F."/>
            <person name="Schaefer M."/>
            <person name="Mueller-Auer S."/>
            <person name="Gabel C."/>
            <person name="Fuchs M."/>
            <person name="Benes V."/>
            <person name="Wurmbach E."/>
            <person name="Drzonek H."/>
            <person name="Erfle H."/>
            <person name="Jordan N."/>
            <person name="Bangert S."/>
            <person name="Wiedelmann R."/>
            <person name="Kranz H."/>
            <person name="Voss H."/>
            <person name="Holland R."/>
            <person name="Brandt P."/>
            <person name="Nyakatura G."/>
            <person name="Vezzi A."/>
            <person name="D'Angelo M."/>
            <person name="Pallavicini A."/>
            <person name="Toppo S."/>
            <person name="Simionati B."/>
            <person name="Conrad A."/>
            <person name="Hornischer K."/>
            <person name="Kauer G."/>
            <person name="Loehnert T.-H."/>
            <person name="Nordsiek G."/>
            <person name="Reichelt J."/>
            <person name="Scharfe M."/>
            <person name="Schoen O."/>
            <person name="Bargues M."/>
            <person name="Terol J."/>
            <person name="Climent J."/>
            <person name="Navarro P."/>
            <person name="Collado C."/>
            <person name="Perez-Perez A."/>
            <person name="Ottenwaelder B."/>
            <person name="Duchemin D."/>
            <person name="Cooke R."/>
            <person name="Laudie M."/>
            <person name="Berger-Llauro C."/>
            <person name="Purnelle B."/>
            <person name="Masuy D."/>
            <person name="de Haan M."/>
            <person name="Maarse A.C."/>
            <person name="Alcaraz J.-P."/>
            <person name="Cottet A."/>
            <person name="Casacuberta E."/>
            <person name="Monfort A."/>
            <person name="Argiriou A."/>
            <person name="Flores M."/>
            <person name="Liguori R."/>
            <person name="Vitale D."/>
            <person name="Mannhaupt G."/>
            <person name="Haase D."/>
            <person name="Schoof H."/>
            <person name="Rudd S."/>
            <person name="Zaccaria P."/>
            <person name="Mewes H.-W."/>
            <person name="Mayer K.F.X."/>
            <person name="Kaul S."/>
            <person name="Town C.D."/>
            <person name="Koo H.L."/>
            <person name="Tallon L.J."/>
            <person name="Jenkins J."/>
            <person name="Rooney T."/>
            <person name="Rizzo M."/>
            <person name="Walts A."/>
            <person name="Utterback T."/>
            <person name="Fujii C.Y."/>
            <person name="Shea T.P."/>
            <person name="Creasy T.H."/>
            <person name="Haas B."/>
            <person name="Maiti R."/>
            <person name="Wu D."/>
            <person name="Peterson J."/>
            <person name="Van Aken S."/>
            <person name="Pai G."/>
            <person name="Militscher J."/>
            <person name="Sellers P."/>
            <person name="Gill J.E."/>
            <person name="Feldblyum T.V."/>
            <person name="Preuss D."/>
            <person name="Lin X."/>
            <person name="Nierman W.C."/>
            <person name="Salzberg S.L."/>
            <person name="White O."/>
            <person name="Venter J.C."/>
            <person name="Fraser C.M."/>
            <person name="Kaneko T."/>
            <person name="Nakamura Y."/>
            <person name="Sato S."/>
            <person name="Kato T."/>
            <person name="Asamizu E."/>
            <person name="Sasamoto S."/>
            <person name="Kimura T."/>
            <person name="Idesawa K."/>
            <person name="Kawashima K."/>
            <person name="Kishida Y."/>
            <person name="Kiyokawa C."/>
            <person name="Kohara M."/>
            <person name="Matsumoto M."/>
            <person name="Matsuno A."/>
            <person name="Muraki A."/>
            <person name="Nakayama S."/>
            <person name="Nakazaki N."/>
            <person name="Shinpo S."/>
            <person name="Takeuchi C."/>
            <person name="Wada T."/>
            <person name="Watanabe A."/>
            <person name="Yamada M."/>
            <person name="Yasuda M."/>
            <person name="Tabata S."/>
        </authorList>
    </citation>
    <scope>NUCLEOTIDE SEQUENCE [LARGE SCALE GENOMIC DNA]</scope>
    <source>
        <strain>cv. Columbia</strain>
    </source>
</reference>
<reference key="10">
    <citation type="journal article" date="2017" name="Plant J.">
        <title>Araport11: a complete reannotation of the Arabidopsis thaliana reference genome.</title>
        <authorList>
            <person name="Cheng C.Y."/>
            <person name="Krishnakumar V."/>
            <person name="Chan A.P."/>
            <person name="Thibaud-Nissen F."/>
            <person name="Schobel S."/>
            <person name="Town C.D."/>
        </authorList>
    </citation>
    <scope>GENOME REANNOTATION</scope>
    <source>
        <strain>cv. Columbia</strain>
    </source>
</reference>
<reference key="11">
    <citation type="journal article" date="2003" name="Science">
        <title>Empirical analysis of transcriptional activity in the Arabidopsis genome.</title>
        <authorList>
            <person name="Yamada K."/>
            <person name="Lim J."/>
            <person name="Dale J.M."/>
            <person name="Chen H."/>
            <person name="Shinn P."/>
            <person name="Palm C.J."/>
            <person name="Southwick A.M."/>
            <person name="Wu H.C."/>
            <person name="Kim C.J."/>
            <person name="Nguyen M."/>
            <person name="Pham P.K."/>
            <person name="Cheuk R.F."/>
            <person name="Karlin-Newmann G."/>
            <person name="Liu S.X."/>
            <person name="Lam B."/>
            <person name="Sakano H."/>
            <person name="Wu T."/>
            <person name="Yu G."/>
            <person name="Miranda M."/>
            <person name="Quach H.L."/>
            <person name="Tripp M."/>
            <person name="Chang C.H."/>
            <person name="Lee J.M."/>
            <person name="Toriumi M.J."/>
            <person name="Chan M.M."/>
            <person name="Tang C.C."/>
            <person name="Onodera C.S."/>
            <person name="Deng J.M."/>
            <person name="Akiyama K."/>
            <person name="Ansari Y."/>
            <person name="Arakawa T."/>
            <person name="Banh J."/>
            <person name="Banno F."/>
            <person name="Bowser L."/>
            <person name="Brooks S.Y."/>
            <person name="Carninci P."/>
            <person name="Chao Q."/>
            <person name="Choy N."/>
            <person name="Enju A."/>
            <person name="Goldsmith A.D."/>
            <person name="Gurjal M."/>
            <person name="Hansen N.F."/>
            <person name="Hayashizaki Y."/>
            <person name="Johnson-Hopson C."/>
            <person name="Hsuan V.W."/>
            <person name="Iida K."/>
            <person name="Karnes M."/>
            <person name="Khan S."/>
            <person name="Koesema E."/>
            <person name="Ishida J."/>
            <person name="Jiang P.X."/>
            <person name="Jones T."/>
            <person name="Kawai J."/>
            <person name="Kamiya A."/>
            <person name="Meyers C."/>
            <person name="Nakajima M."/>
            <person name="Narusaka M."/>
            <person name="Seki M."/>
            <person name="Sakurai T."/>
            <person name="Satou M."/>
            <person name="Tamse R."/>
            <person name="Vaysberg M."/>
            <person name="Wallender E.K."/>
            <person name="Wong C."/>
            <person name="Yamamura Y."/>
            <person name="Yuan S."/>
            <person name="Shinozaki K."/>
            <person name="Davis R.W."/>
            <person name="Theologis A."/>
            <person name="Ecker J.R."/>
        </authorList>
    </citation>
    <scope>NUCLEOTIDE SEQUENCE [LARGE SCALE MRNA]</scope>
    <source>
        <strain>cv. Columbia</strain>
    </source>
</reference>
<reference key="12">
    <citation type="submission" date="2002-03" db="EMBL/GenBank/DDBJ databases">
        <title>Full-length cDNA from Arabidopsis thaliana.</title>
        <authorList>
            <person name="Brover V.V."/>
            <person name="Troukhan M.E."/>
            <person name="Alexandrov N.A."/>
            <person name="Lu Y.-P."/>
            <person name="Flavell R.B."/>
            <person name="Feldmann K.A."/>
        </authorList>
    </citation>
    <scope>NUCLEOTIDE SEQUENCE [LARGE SCALE MRNA]</scope>
</reference>
<reference key="13">
    <citation type="journal article" date="1999" name="J. Biol. Chem.">
        <title>Plant importin alpha binds nuclear localization sequences with high affinity and can mediate nuclear import independent of importin beta.</title>
        <authorList>
            <person name="Hubner S."/>
            <person name="Smith H.M."/>
            <person name="Hu W."/>
            <person name="Chan C.K."/>
            <person name="Rihs H.P."/>
            <person name="Paschal B.M."/>
            <person name="Raikhel N.V."/>
            <person name="Jans D.A."/>
        </authorList>
    </citation>
    <scope>FUNCTION</scope>
    <scope>INTERACTION WITH IMPORTIN SUBUNIT BETA-1 KPNB1</scope>
</reference>
<reference key="14">
    <citation type="journal article" date="2002" name="Proc. Natl. Acad. Sci. U.S.A.">
        <title>Increasing plant susceptibility to Agrobacterium infection by overexpression of the Arabidopsis nuclear protein VIP1.</title>
        <authorList>
            <person name="Tzfira T."/>
            <person name="Vaidya M."/>
            <person name="Citovsky V."/>
        </authorList>
    </citation>
    <scope>FUNCTION</scope>
    <scope>INTERACTION WITH VIP1</scope>
</reference>
<reference key="15">
    <citation type="journal article" date="2008" name="Plant Cell">
        <title>IMPa-4, an Arabidopsis importin alpha isoform, is preferentially involved in agrobacterium-mediated plant transformation.</title>
        <authorList>
            <person name="Bhattacharjee S."/>
            <person name="Lee L.Y."/>
            <person name="Oltmanns H."/>
            <person name="Cao H."/>
            <person name="Gupta V."/>
            <person name="Cuperus J."/>
            <person name="Gelvin S.B."/>
        </authorList>
    </citation>
    <scope>FUNCTION</scope>
    <scope>INTERACTION WITH AGROBACTERIUM VIRD2 AND VIRE2</scope>
    <scope>GENE FAMILY</scope>
</reference>
<reference key="16">
    <citation type="journal article" date="2013" name="Plant J.">
        <title>An Arabidopsis homolog of importin beta1 is required for ABA response and drought tolerance.</title>
        <authorList>
            <person name="Luo Y."/>
            <person name="Wang Z."/>
            <person name="Ji H."/>
            <person name="Fang H."/>
            <person name="Wang S."/>
            <person name="Tian L."/>
            <person name="Li X."/>
        </authorList>
    </citation>
    <scope>INTERACTION WITH KPNB1</scope>
</reference>
<reference key="17">
    <citation type="journal article" date="2021" name="Stress Biol.">
        <title>SWO1 modulates cell wall integrity under salt stress by interacting with importin alpha in Arabidopsis.</title>
        <authorList>
            <person name="Wang Z."/>
            <person name="Wang M."/>
            <person name="Yang C."/>
            <person name="Zhao L."/>
            <person name="Qin G."/>
            <person name="Peng L."/>
            <person name="Zheng Q."/>
            <person name="Nie W."/>
            <person name="Song C.-P."/>
            <person name="Shi H."/>
            <person name="Zhu J.-K."/>
            <person name="Zhao C."/>
        </authorList>
    </citation>
    <scope>FUNCTION</scope>
    <scope>DISRUPTION PHENOTYPE</scope>
    <scope>INTERACTION WITH SWO1</scope>
    <source>
        <strain>cv. Columbia</strain>
    </source>
</reference>
<accession>Q96321</accession>
<accession>O49599</accession>
<accession>O81520</accession>
<accession>Q940R6</accession>
<accession>Q9C841</accession>
<accession>Q9ZRI5</accession>
<gene>
    <name evidence="10" type="primary">IMPA1</name>
    <name type="synonym">KAP1</name>
    <name evidence="12" type="ordered locus">At3g06720</name>
    <name evidence="13" type="ORF">F3E22.14</name>
    <name evidence="14" type="ORF">T8E24.1</name>
</gene>
<protein>
    <recommendedName>
        <fullName evidence="11">Importin subunit alpha-1</fullName>
        <shortName evidence="10">IMPa-1</shortName>
    </recommendedName>
    <alternativeName>
        <fullName>Karyopherin subunit alpha-1</fullName>
        <shortName>KAP-alpha-1</shortName>
    </alternativeName>
</protein>
<evidence type="ECO:0000255" key="1"/>
<evidence type="ECO:0000255" key="2">
    <source>
        <dbReference type="PROSITE-ProRule" id="PRU00561"/>
    </source>
</evidence>
<evidence type="ECO:0000256" key="3">
    <source>
        <dbReference type="SAM" id="MobiDB-lite"/>
    </source>
</evidence>
<evidence type="ECO:0000269" key="4">
    <source>
    </source>
</evidence>
<evidence type="ECO:0000269" key="5">
    <source>
    </source>
</evidence>
<evidence type="ECO:0000269" key="6">
    <source>
    </source>
</evidence>
<evidence type="ECO:0000269" key="7">
    <source>
    </source>
</evidence>
<evidence type="ECO:0000269" key="8">
    <source>
    </source>
</evidence>
<evidence type="ECO:0000269" key="9">
    <source>
    </source>
</evidence>
<evidence type="ECO:0000303" key="10">
    <source>
    </source>
</evidence>
<evidence type="ECO:0000305" key="11"/>
<evidence type="ECO:0000312" key="12">
    <source>
        <dbReference type="Araport" id="AT3G06720"/>
    </source>
</evidence>
<evidence type="ECO:0000312" key="13">
    <source>
        <dbReference type="EMBL" id="AAF63826.1"/>
    </source>
</evidence>
<evidence type="ECO:0000312" key="14">
    <source>
        <dbReference type="EMBL" id="AAG50999.1"/>
    </source>
</evidence>
<dbReference type="EMBL" id="L81172">
    <property type="protein sequence ID" value="AAD09923.1"/>
    <property type="status" value="ALT_FRAME"/>
    <property type="molecule type" value="mRNA"/>
</dbReference>
<dbReference type="EMBL" id="AF077528">
    <property type="protein sequence ID" value="AAC27644.1"/>
    <property type="molecule type" value="mRNA"/>
</dbReference>
<dbReference type="EMBL" id="U69533">
    <property type="protein sequence ID" value="AAB72116.2"/>
    <property type="molecule type" value="mRNA"/>
</dbReference>
<dbReference type="EMBL" id="Y15224">
    <property type="protein sequence ID" value="CAA75513.1"/>
    <property type="molecule type" value="mRNA"/>
</dbReference>
<dbReference type="EMBL" id="AC023912">
    <property type="protein sequence ID" value="AAF63826.1"/>
    <property type="molecule type" value="Genomic_DNA"/>
</dbReference>
<dbReference type="EMBL" id="AC036106">
    <property type="protein sequence ID" value="AAG50999.1"/>
    <property type="molecule type" value="Genomic_DNA"/>
</dbReference>
<dbReference type="EMBL" id="CP002686">
    <property type="protein sequence ID" value="AEE74447.1"/>
    <property type="molecule type" value="Genomic_DNA"/>
</dbReference>
<dbReference type="EMBL" id="CP002686">
    <property type="protein sequence ID" value="AEE74448.1"/>
    <property type="molecule type" value="Genomic_DNA"/>
</dbReference>
<dbReference type="EMBL" id="AY094390">
    <property type="protein sequence ID" value="AAM19769.1"/>
    <property type="molecule type" value="mRNA"/>
</dbReference>
<dbReference type="EMBL" id="AY054164">
    <property type="protein sequence ID" value="AAL06825.1"/>
    <property type="molecule type" value="mRNA"/>
</dbReference>
<dbReference type="EMBL" id="AY088732">
    <property type="protein sequence ID" value="AAM67050.1"/>
    <property type="molecule type" value="mRNA"/>
</dbReference>
<dbReference type="EMBL" id="AY125529">
    <property type="protein sequence ID" value="AAM78039.1"/>
    <property type="molecule type" value="mRNA"/>
</dbReference>
<dbReference type="PIR" id="T52102">
    <property type="entry name" value="T52102"/>
</dbReference>
<dbReference type="PIR" id="T52268">
    <property type="entry name" value="T52268"/>
</dbReference>
<dbReference type="SMR" id="Q96321"/>
<dbReference type="BioGRID" id="5192">
    <property type="interactions" value="70"/>
</dbReference>
<dbReference type="FunCoup" id="Q96321">
    <property type="interactions" value="4397"/>
</dbReference>
<dbReference type="IntAct" id="Q96321">
    <property type="interactions" value="49"/>
</dbReference>
<dbReference type="STRING" id="3702.Q96321"/>
<dbReference type="iPTMnet" id="Q96321"/>
<dbReference type="MetOSite" id="Q96321"/>
<dbReference type="PaxDb" id="3702-AT3G06720.1"/>
<dbReference type="ProteomicsDB" id="247012"/>
<dbReference type="EnsemblPlants" id="AT3G06720.1">
    <property type="protein sequence ID" value="AT3G06720.1"/>
    <property type="gene ID" value="AT3G06720"/>
</dbReference>
<dbReference type="EnsemblPlants" id="AT3G06720.2">
    <property type="protein sequence ID" value="AT3G06720.2"/>
    <property type="gene ID" value="AT3G06720"/>
</dbReference>
<dbReference type="GeneID" id="819857"/>
<dbReference type="Gramene" id="AT3G06720.1">
    <property type="protein sequence ID" value="AT3G06720.1"/>
    <property type="gene ID" value="AT3G06720"/>
</dbReference>
<dbReference type="Gramene" id="AT3G06720.2">
    <property type="protein sequence ID" value="AT3G06720.2"/>
    <property type="gene ID" value="AT3G06720"/>
</dbReference>
<dbReference type="KEGG" id="ath:AT3G06720"/>
<dbReference type="Araport" id="AT3G06720"/>
<dbReference type="TAIR" id="AT3G06720">
    <property type="gene designation" value="IMPA-1"/>
</dbReference>
<dbReference type="eggNOG" id="KOG0166">
    <property type="taxonomic scope" value="Eukaryota"/>
</dbReference>
<dbReference type="HOGENOM" id="CLU_018084_6_0_1"/>
<dbReference type="InParanoid" id="Q96321"/>
<dbReference type="OMA" id="QNEFNFG"/>
<dbReference type="OrthoDB" id="29145at2759"/>
<dbReference type="PhylomeDB" id="Q96321"/>
<dbReference type="CD-CODE" id="4299E36E">
    <property type="entry name" value="Nucleolus"/>
</dbReference>
<dbReference type="PRO" id="PR:Q96321"/>
<dbReference type="Proteomes" id="UP000006548">
    <property type="component" value="Chromosome 3"/>
</dbReference>
<dbReference type="ExpressionAtlas" id="Q96321">
    <property type="expression patterns" value="baseline and differential"/>
</dbReference>
<dbReference type="GO" id="GO:0005737">
    <property type="term" value="C:cytoplasm"/>
    <property type="evidence" value="ECO:0007669"/>
    <property type="project" value="InterPro"/>
</dbReference>
<dbReference type="GO" id="GO:0005635">
    <property type="term" value="C:nuclear envelope"/>
    <property type="evidence" value="ECO:0000314"/>
    <property type="project" value="TAIR"/>
</dbReference>
<dbReference type="GO" id="GO:0005730">
    <property type="term" value="C:nucleolus"/>
    <property type="evidence" value="ECO:0007005"/>
    <property type="project" value="TAIR"/>
</dbReference>
<dbReference type="GO" id="GO:0009505">
    <property type="term" value="C:plant-type cell wall"/>
    <property type="evidence" value="ECO:0007005"/>
    <property type="project" value="TAIR"/>
</dbReference>
<dbReference type="GO" id="GO:0061608">
    <property type="term" value="F:nuclear import signal receptor activity"/>
    <property type="evidence" value="ECO:0000315"/>
    <property type="project" value="UniProtKB"/>
</dbReference>
<dbReference type="GO" id="GO:0008139">
    <property type="term" value="F:nuclear localization sequence binding"/>
    <property type="evidence" value="ECO:0000315"/>
    <property type="project" value="UniProtKB"/>
</dbReference>
<dbReference type="GO" id="GO:0071555">
    <property type="term" value="P:cell wall organization"/>
    <property type="evidence" value="ECO:0000315"/>
    <property type="project" value="UniProtKB"/>
</dbReference>
<dbReference type="GO" id="GO:0006607">
    <property type="term" value="P:NLS-bearing protein import into nucleus"/>
    <property type="evidence" value="ECO:0000315"/>
    <property type="project" value="UniProtKB"/>
</dbReference>
<dbReference type="GO" id="GO:0006606">
    <property type="term" value="P:protein import into nucleus"/>
    <property type="evidence" value="ECO:0000314"/>
    <property type="project" value="UniProtKB"/>
</dbReference>
<dbReference type="GO" id="GO:2000280">
    <property type="term" value="P:regulation of root development"/>
    <property type="evidence" value="ECO:0000315"/>
    <property type="project" value="UniProtKB"/>
</dbReference>
<dbReference type="GO" id="GO:0009651">
    <property type="term" value="P:response to salt stress"/>
    <property type="evidence" value="ECO:0000315"/>
    <property type="project" value="UniProtKB"/>
</dbReference>
<dbReference type="FunFam" id="1.20.5.690:FF:000002">
    <property type="entry name" value="Importin subunit alpha"/>
    <property type="match status" value="1"/>
</dbReference>
<dbReference type="FunFam" id="1.25.10.10:FF:000040">
    <property type="entry name" value="Importin subunit alpha"/>
    <property type="match status" value="1"/>
</dbReference>
<dbReference type="Gene3D" id="1.20.5.690">
    <property type="entry name" value="Importin-alpha, importin-beta-binding domain"/>
    <property type="match status" value="1"/>
</dbReference>
<dbReference type="Gene3D" id="1.25.10.10">
    <property type="entry name" value="Leucine-rich Repeat Variant"/>
    <property type="match status" value="1"/>
</dbReference>
<dbReference type="InterPro" id="IPR011989">
    <property type="entry name" value="ARM-like"/>
</dbReference>
<dbReference type="InterPro" id="IPR016024">
    <property type="entry name" value="ARM-type_fold"/>
</dbReference>
<dbReference type="InterPro" id="IPR032413">
    <property type="entry name" value="Arm_3"/>
</dbReference>
<dbReference type="InterPro" id="IPR000225">
    <property type="entry name" value="Armadillo"/>
</dbReference>
<dbReference type="InterPro" id="IPR002652">
    <property type="entry name" value="Importin-a_IBB"/>
</dbReference>
<dbReference type="InterPro" id="IPR036975">
    <property type="entry name" value="Importin-a_IBB_sf"/>
</dbReference>
<dbReference type="InterPro" id="IPR024931">
    <property type="entry name" value="Importin_alpha"/>
</dbReference>
<dbReference type="PANTHER" id="PTHR23316">
    <property type="entry name" value="IMPORTIN ALPHA"/>
    <property type="match status" value="1"/>
</dbReference>
<dbReference type="Pfam" id="PF00514">
    <property type="entry name" value="Arm"/>
    <property type="match status" value="8"/>
</dbReference>
<dbReference type="Pfam" id="PF16186">
    <property type="entry name" value="Arm_3"/>
    <property type="match status" value="1"/>
</dbReference>
<dbReference type="Pfam" id="PF01749">
    <property type="entry name" value="IBB"/>
    <property type="match status" value="1"/>
</dbReference>
<dbReference type="PIRSF" id="PIRSF005673">
    <property type="entry name" value="Importin_alpha"/>
    <property type="match status" value="1"/>
</dbReference>
<dbReference type="SMART" id="SM00185">
    <property type="entry name" value="ARM"/>
    <property type="match status" value="8"/>
</dbReference>
<dbReference type="SUPFAM" id="SSF48371">
    <property type="entry name" value="ARM repeat"/>
    <property type="match status" value="1"/>
</dbReference>
<dbReference type="PROSITE" id="PS50176">
    <property type="entry name" value="ARM_REPEAT"/>
    <property type="match status" value="4"/>
</dbReference>
<dbReference type="PROSITE" id="PS51214">
    <property type="entry name" value="IBB"/>
    <property type="match status" value="1"/>
</dbReference>
<organism>
    <name type="scientific">Arabidopsis thaliana</name>
    <name type="common">Mouse-ear cress</name>
    <dbReference type="NCBI Taxonomy" id="3702"/>
    <lineage>
        <taxon>Eukaryota</taxon>
        <taxon>Viridiplantae</taxon>
        <taxon>Streptophyta</taxon>
        <taxon>Embryophyta</taxon>
        <taxon>Tracheophyta</taxon>
        <taxon>Spermatophyta</taxon>
        <taxon>Magnoliopsida</taxon>
        <taxon>eudicotyledons</taxon>
        <taxon>Gunneridae</taxon>
        <taxon>Pentapetalae</taxon>
        <taxon>rosids</taxon>
        <taxon>malvids</taxon>
        <taxon>Brassicales</taxon>
        <taxon>Brassicaceae</taxon>
        <taxon>Camelineae</taxon>
        <taxon>Arabidopsis</taxon>
    </lineage>
</organism>
<comment type="function">
    <text evidence="4 6 8">Binds to conventional NLS motifs with high affinity in the absence of an importin beta subunit. Mediates nuclear protein import across the nuclear envelope in vitro in the absence of exogenously added importin beta subunit (PubMed:10428841, PubMed:37676567). Involved in the maintenance of cell wall integrity under salt stress via interaction with SWO1 (PubMed:37676567). Acts as a cellular receptor for the nuclear import of the virD2 protein of Agrobacterium, but is not essential for Agrobacterium-mediated root transformation (PubMed:18836040).</text>
</comment>
<comment type="subunit">
    <text evidence="4 5 6 7 8">Forms a complex with the importin subunit beta-1 KPNB1 (PubMed:10428841, PubMed:23582042). Interacts with VIP1 and promotes its nuclear import (PubMed:12124400). Interacts with A.tumefaciens VirD2 and VirE2 (PubMed:18836040). Binds to SWO1 (PubMed:37676567).</text>
</comment>
<comment type="interaction">
    <interactant intactId="EBI-2131458">
        <id>Q96321</id>
    </interactant>
    <interactant intactId="EBI-6368424">
        <id>F8RP38</id>
        <label>KIW84_071581</label>
    </interactant>
    <organismsDiffer>true</organismsDiffer>
    <experiments>3</experiments>
</comment>
<comment type="subcellular location">
    <subcellularLocation>
        <location evidence="9">Nucleus envelope</location>
    </subcellularLocation>
</comment>
<comment type="disruption phenotype">
    <text evidence="8">The impa1 impa2 double mutant exhibits root growth inhibition under salt stress and reduced NLS-mediated import of nuclear proteins (PubMed:37676567). Salt-hypersensitivity is exacerbated in plants lacking also SWO1 (PubMed:37676567).</text>
</comment>
<comment type="similarity">
    <text evidence="11">Belongs to the importin alpha family.</text>
</comment>
<comment type="sequence caution" evidence="11">
    <conflict type="frameshift">
        <sequence resource="EMBL-CDS" id="AAD09923"/>
    </conflict>
</comment>
<keyword id="KW-0539">Nucleus</keyword>
<keyword id="KW-0653">Protein transport</keyword>
<keyword id="KW-1185">Reference proteome</keyword>
<keyword id="KW-0677">Repeat</keyword>
<keyword id="KW-0813">Transport</keyword>